<evidence type="ECO:0000255" key="1">
    <source>
        <dbReference type="HAMAP-Rule" id="MF_00484"/>
    </source>
</evidence>
<sequence>MRVLHVCSELYPILKTGGLADVTAALPPALAGFGVDSRVLVPGFPAFINAIKDKQLLINIPSRFGAEEINIFLAKISNTKIDIYVIDAPSLFARPGNPYADSSNQAYADNYLRFALLGWVAARISEGLDAKWKPEIVHSHDWHAGLVPAYIKASELASGKKAVKTVFTVHNLAYQGLFPMSVFAELDLPGIFLSMNGLEFYGQVSFMKAGLYFADKITTVSPTYAKEIQIYEQGCGLEGLLADRHNDLYGVLNGVDPQIWNPKKDSLIATNYSSTTVATGKAKCKLALQQMMGLAEKEDALLFGIVTRLTEQKGLNLLIEAIGEITSRGGQIVLLGSGDKALEEVFLAAAKKYSKSIAVQIGYDEEQAHRIIAGSDVIMVPSRFEPCGLTQLYGLTYGTLPLVHKVGGLADTVIDSSLENLADGTATGFVFDEFSVESLTLAIRRAFALYNRKTDWKKVRKTAMQQQVTWDSSAEKIYQIYKNLVRENN</sequence>
<gene>
    <name evidence="1" type="primary">glgA</name>
    <name type="ordered locus">FTT_0416</name>
</gene>
<name>GLGA_FRATT</name>
<keyword id="KW-0320">Glycogen biosynthesis</keyword>
<keyword id="KW-0328">Glycosyltransferase</keyword>
<keyword id="KW-1185">Reference proteome</keyword>
<keyword id="KW-0808">Transferase</keyword>
<comment type="function">
    <text evidence="1">Synthesizes alpha-1,4-glucan chains using ADP-glucose.</text>
</comment>
<comment type="catalytic activity">
    <reaction evidence="1">
        <text>[(1-&gt;4)-alpha-D-glucosyl](n) + ADP-alpha-D-glucose = [(1-&gt;4)-alpha-D-glucosyl](n+1) + ADP + H(+)</text>
        <dbReference type="Rhea" id="RHEA:18189"/>
        <dbReference type="Rhea" id="RHEA-COMP:9584"/>
        <dbReference type="Rhea" id="RHEA-COMP:9587"/>
        <dbReference type="ChEBI" id="CHEBI:15378"/>
        <dbReference type="ChEBI" id="CHEBI:15444"/>
        <dbReference type="ChEBI" id="CHEBI:57498"/>
        <dbReference type="ChEBI" id="CHEBI:456216"/>
        <dbReference type="EC" id="2.4.1.21"/>
    </reaction>
</comment>
<comment type="pathway">
    <text evidence="1">Glycan biosynthesis; glycogen biosynthesis.</text>
</comment>
<comment type="similarity">
    <text evidence="1">Belongs to the glycosyltransferase 1 family. Bacterial/plant glycogen synthase subfamily.</text>
</comment>
<accession>Q5NHN2</accession>
<protein>
    <recommendedName>
        <fullName evidence="1">Glycogen synthase</fullName>
        <ecNumber evidence="1">2.4.1.21</ecNumber>
    </recommendedName>
    <alternativeName>
        <fullName evidence="1">Starch [bacterial glycogen] synthase</fullName>
    </alternativeName>
</protein>
<organism>
    <name type="scientific">Francisella tularensis subsp. tularensis (strain SCHU S4 / Schu 4)</name>
    <dbReference type="NCBI Taxonomy" id="177416"/>
    <lineage>
        <taxon>Bacteria</taxon>
        <taxon>Pseudomonadati</taxon>
        <taxon>Pseudomonadota</taxon>
        <taxon>Gammaproteobacteria</taxon>
        <taxon>Thiotrichales</taxon>
        <taxon>Francisellaceae</taxon>
        <taxon>Francisella</taxon>
    </lineage>
</organism>
<dbReference type="EC" id="2.4.1.21" evidence="1"/>
<dbReference type="EMBL" id="AJ749949">
    <property type="protein sequence ID" value="CAG45049.1"/>
    <property type="molecule type" value="Genomic_DNA"/>
</dbReference>
<dbReference type="RefSeq" id="WP_003020156.1">
    <property type="nucleotide sequence ID" value="NZ_CP010290.1"/>
</dbReference>
<dbReference type="RefSeq" id="YP_169460.1">
    <property type="nucleotide sequence ID" value="NC_006570.2"/>
</dbReference>
<dbReference type="SMR" id="Q5NHN2"/>
<dbReference type="STRING" id="177416.FTT_0416"/>
<dbReference type="CAZy" id="GT5">
    <property type="family name" value="Glycosyltransferase Family 5"/>
</dbReference>
<dbReference type="DNASU" id="3192504"/>
<dbReference type="EnsemblBacteria" id="CAG45049">
    <property type="protein sequence ID" value="CAG45049"/>
    <property type="gene ID" value="FTT_0416"/>
</dbReference>
<dbReference type="KEGG" id="ftu:FTT_0416"/>
<dbReference type="eggNOG" id="COG0297">
    <property type="taxonomic scope" value="Bacteria"/>
</dbReference>
<dbReference type="OrthoDB" id="9808590at2"/>
<dbReference type="UniPathway" id="UPA00164"/>
<dbReference type="Proteomes" id="UP000001174">
    <property type="component" value="Chromosome"/>
</dbReference>
<dbReference type="GO" id="GO:0005829">
    <property type="term" value="C:cytosol"/>
    <property type="evidence" value="ECO:0007669"/>
    <property type="project" value="TreeGrafter"/>
</dbReference>
<dbReference type="GO" id="GO:0009011">
    <property type="term" value="F:alpha-1,4-glucan glucosyltransferase (ADP-glucose donor) activity"/>
    <property type="evidence" value="ECO:0007669"/>
    <property type="project" value="UniProtKB-UniRule"/>
</dbReference>
<dbReference type="GO" id="GO:0004373">
    <property type="term" value="F:alpha-1,4-glucan glucosyltransferase (UDP-glucose donor) activity"/>
    <property type="evidence" value="ECO:0007669"/>
    <property type="project" value="InterPro"/>
</dbReference>
<dbReference type="GO" id="GO:0005978">
    <property type="term" value="P:glycogen biosynthetic process"/>
    <property type="evidence" value="ECO:0007669"/>
    <property type="project" value="UniProtKB-UniRule"/>
</dbReference>
<dbReference type="CDD" id="cd03791">
    <property type="entry name" value="GT5_Glycogen_synthase_DULL1-like"/>
    <property type="match status" value="1"/>
</dbReference>
<dbReference type="Gene3D" id="3.40.50.2000">
    <property type="entry name" value="Glycogen Phosphorylase B"/>
    <property type="match status" value="2"/>
</dbReference>
<dbReference type="HAMAP" id="MF_00484">
    <property type="entry name" value="Glycogen_synth"/>
    <property type="match status" value="1"/>
</dbReference>
<dbReference type="InterPro" id="IPR001296">
    <property type="entry name" value="Glyco_trans_1"/>
</dbReference>
<dbReference type="InterPro" id="IPR011835">
    <property type="entry name" value="GS/SS"/>
</dbReference>
<dbReference type="InterPro" id="IPR013534">
    <property type="entry name" value="Starch_synth_cat_dom"/>
</dbReference>
<dbReference type="NCBIfam" id="TIGR02095">
    <property type="entry name" value="glgA"/>
    <property type="match status" value="1"/>
</dbReference>
<dbReference type="NCBIfam" id="NF001899">
    <property type="entry name" value="PRK00654.1-2"/>
    <property type="match status" value="1"/>
</dbReference>
<dbReference type="PANTHER" id="PTHR45825:SF11">
    <property type="entry name" value="ALPHA AMYLASE DOMAIN-CONTAINING PROTEIN"/>
    <property type="match status" value="1"/>
</dbReference>
<dbReference type="PANTHER" id="PTHR45825">
    <property type="entry name" value="GRANULE-BOUND STARCH SYNTHASE 1, CHLOROPLASTIC/AMYLOPLASTIC"/>
    <property type="match status" value="1"/>
</dbReference>
<dbReference type="Pfam" id="PF08323">
    <property type="entry name" value="Glyco_transf_5"/>
    <property type="match status" value="1"/>
</dbReference>
<dbReference type="Pfam" id="PF00534">
    <property type="entry name" value="Glycos_transf_1"/>
    <property type="match status" value="1"/>
</dbReference>
<dbReference type="SUPFAM" id="SSF53756">
    <property type="entry name" value="UDP-Glycosyltransferase/glycogen phosphorylase"/>
    <property type="match status" value="1"/>
</dbReference>
<reference key="1">
    <citation type="journal article" date="2005" name="Nat. Genet.">
        <title>The complete genome sequence of Francisella tularensis, the causative agent of tularemia.</title>
        <authorList>
            <person name="Larsson P."/>
            <person name="Oyston P.C.F."/>
            <person name="Chain P."/>
            <person name="Chu M.C."/>
            <person name="Duffield M."/>
            <person name="Fuxelius H.-H."/>
            <person name="Garcia E."/>
            <person name="Haelltorp G."/>
            <person name="Johansson D."/>
            <person name="Isherwood K.E."/>
            <person name="Karp P.D."/>
            <person name="Larsson E."/>
            <person name="Liu Y."/>
            <person name="Michell S."/>
            <person name="Prior J."/>
            <person name="Prior R."/>
            <person name="Malfatti S."/>
            <person name="Sjoestedt A."/>
            <person name="Svensson K."/>
            <person name="Thompson N."/>
            <person name="Vergez L."/>
            <person name="Wagg J.K."/>
            <person name="Wren B.W."/>
            <person name="Lindler L.E."/>
            <person name="Andersson S.G.E."/>
            <person name="Forsman M."/>
            <person name="Titball R.W."/>
        </authorList>
    </citation>
    <scope>NUCLEOTIDE SEQUENCE [LARGE SCALE GENOMIC DNA]</scope>
    <source>
        <strain>SCHU S4 / Schu 4</strain>
    </source>
</reference>
<proteinExistence type="inferred from homology"/>
<feature type="chain" id="PRO_0000188615" description="Glycogen synthase">
    <location>
        <begin position="1"/>
        <end position="489"/>
    </location>
</feature>
<feature type="binding site" evidence="1">
    <location>
        <position position="15"/>
    </location>
    <ligand>
        <name>ADP-alpha-D-glucose</name>
        <dbReference type="ChEBI" id="CHEBI:57498"/>
    </ligand>
</feature>